<feature type="chain" id="PRO_0000066501" description="Chaperone protein YscY">
    <location>
        <begin position="1"/>
        <end position="114"/>
    </location>
</feature>
<feature type="helix" evidence="4">
    <location>
        <begin position="7"/>
        <end position="22"/>
    </location>
</feature>
<feature type="helix" evidence="4">
    <location>
        <begin position="26"/>
        <end position="39"/>
    </location>
</feature>
<feature type="helix" evidence="4">
    <location>
        <begin position="44"/>
        <end position="56"/>
    </location>
</feature>
<feature type="helix" evidence="4">
    <location>
        <begin position="60"/>
        <end position="73"/>
    </location>
</feature>
<feature type="helix" evidence="4">
    <location>
        <begin position="78"/>
        <end position="90"/>
    </location>
</feature>
<feature type="helix" evidence="4">
    <location>
        <begin position="94"/>
        <end position="107"/>
    </location>
</feature>
<keyword id="KW-0002">3D-structure</keyword>
<keyword id="KW-0143">Chaperone</keyword>
<keyword id="KW-0963">Cytoplasm</keyword>
<keyword id="KW-0614">Plasmid</keyword>
<evidence type="ECO:0000250" key="1"/>
<evidence type="ECO:0000269" key="2">
    <source>
    </source>
</evidence>
<evidence type="ECO:0000269" key="3">
    <source>
    </source>
</evidence>
<evidence type="ECO:0007829" key="4">
    <source>
        <dbReference type="PDB" id="7QIH"/>
    </source>
</evidence>
<comment type="function">
    <text evidence="1 3">Required for Yop secretion. Functions probably as a chaperone which stabilizes YscX within the cell, before its secretion (By similarity).</text>
</comment>
<comment type="subunit">
    <text evidence="1">Binds to YscX.</text>
</comment>
<comment type="subcellular location">
    <subcellularLocation>
        <location evidence="1">Cytoplasm</location>
    </subcellularLocation>
</comment>
<comment type="induction">
    <text evidence="2">Temperature seems to play the major role in regulation of transcription of the lcrE-containing operon of pYV, whereas Ca(2+) concentration has only a moderate effect at 37 degrees Celsius, and no effect at room temperature.</text>
</comment>
<protein>
    <recommendedName>
        <fullName>Chaperone protein YscY</fullName>
    </recommendedName>
    <alternativeName>
        <fullName>Yop proteins translocation protein Y</fullName>
    </alternativeName>
</protein>
<accession>P0C2N2</accession>
<accession>P21209</accession>
<accession>Q93KU0</accession>
<sequence length="114" mass="13117">MNITLTKRQQEFLLLNGWLQLQCGHAERACILLDALLTLNPEHLAGRRCRLVALLNNNQGERAEKEAQWLISHDPLQAGNWLCLSRAQQLNGDLDKARHAYQHYLELKDHNESP</sequence>
<geneLocation type="plasmid">
    <name>pYV</name>
</geneLocation>
<geneLocation type="plasmid">
    <name>pYVe227</name>
</geneLocation>
<geneLocation type="plasmid">
    <name>pYVa127/90</name>
</geneLocation>
<reference key="1">
    <citation type="journal article" date="1990" name="J. Bacteriol.">
        <title>The lcrE gene is part of an operon in the lcr region of Yersinia enterocolitica O:3.</title>
        <authorList>
            <person name="Viitanen A.-M."/>
            <person name="Toivanen P."/>
            <person name="Skurnik M."/>
        </authorList>
    </citation>
    <scope>NUCLEOTIDE SEQUENCE [GENOMIC DNA]</scope>
    <scope>INDUCTION</scope>
    <source>
        <strain>Serotype O:3</strain>
        <plasmid>pYV</plasmid>
    </source>
</reference>
<reference key="2">
    <citation type="submission" date="1998-10" db="EMBL/GenBank/DDBJ databases">
        <title>Detailed genetic map of the pYVe227 plasmid of Yersinia enterocolitica serotype O:9.</title>
        <authorList>
            <person name="Iriarte M."/>
            <person name="Lambermont I."/>
            <person name="Kerbourch C."/>
            <person name="Cornelis G.R."/>
        </authorList>
    </citation>
    <scope>NUCLEOTIDE SEQUENCE [GENOMIC DNA]</scope>
    <source>
        <strain>W22703 / Serotype O:9 / Biotype 2</strain>
        <plasmid>pYVe227</plasmid>
    </source>
</reference>
<reference key="3">
    <citation type="journal article" date="2003" name="Res. Microbiol.">
        <title>DNA sequence and analysis of the pYVa127/90 virulence plasmid of Yersinia enterocolitica strain A127/90.</title>
        <authorList>
            <person name="Foultier B."/>
            <person name="Cornelis G.R."/>
        </authorList>
    </citation>
    <scope>NUCLEOTIDE SEQUENCE [GENOMIC DNA]</scope>
    <source>
        <strain>A127/90 / Serotype O:8 / Biotype 1B</strain>
        <plasmid>pYVa127/90</plasmid>
    </source>
</reference>
<reference key="4">
    <citation type="journal article" date="1999" name="J. Bacteriol.">
        <title>Identification of SycN, YscX, and YscY, three new elements of the Yersinia Yop virulon.</title>
        <authorList>
            <person name="Iriarte M."/>
            <person name="Cornelis G.R."/>
        </authorList>
    </citation>
    <scope>FUNCTION</scope>
    <source>
        <plasmid>pYV</plasmid>
    </source>
</reference>
<proteinExistence type="evidence at protein level"/>
<gene>
    <name type="primary">yscY</name>
</gene>
<name>YSCY_YEREN</name>
<organism>
    <name type="scientific">Yersinia enterocolitica</name>
    <dbReference type="NCBI Taxonomy" id="630"/>
    <lineage>
        <taxon>Bacteria</taxon>
        <taxon>Pseudomonadati</taxon>
        <taxon>Pseudomonadota</taxon>
        <taxon>Gammaproteobacteria</taxon>
        <taxon>Enterobacterales</taxon>
        <taxon>Yersiniaceae</taxon>
        <taxon>Yersinia</taxon>
    </lineage>
</organism>
<dbReference type="EMBL" id="M32097">
    <property type="protein sequence ID" value="AAA98432.1"/>
    <property type="molecule type" value="Genomic_DNA"/>
</dbReference>
<dbReference type="EMBL" id="AF102990">
    <property type="protein sequence ID" value="AAD16819.1"/>
    <property type="molecule type" value="Genomic_DNA"/>
</dbReference>
<dbReference type="EMBL" id="AY150843">
    <property type="protein sequence ID" value="AAN37530.1"/>
    <property type="molecule type" value="Genomic_DNA"/>
</dbReference>
<dbReference type="PIR" id="E35392">
    <property type="entry name" value="E35392"/>
</dbReference>
<dbReference type="RefSeq" id="NP_052396.1">
    <property type="nucleotide sequence ID" value="NC_002120.1"/>
</dbReference>
<dbReference type="RefSeq" id="NP_783669.1">
    <property type="nucleotide sequence ID" value="NC_004564.1"/>
</dbReference>
<dbReference type="RefSeq" id="WP_002229791.1">
    <property type="nucleotide sequence ID" value="NZ_NWMR01000033.1"/>
</dbReference>
<dbReference type="PDB" id="7QIH">
    <property type="method" value="X-ray"/>
    <property type="resolution" value="1.92 A"/>
    <property type="chains" value="A/C=2-114"/>
</dbReference>
<dbReference type="PDB" id="7QII">
    <property type="method" value="X-ray"/>
    <property type="resolution" value="3.29 A"/>
    <property type="chains" value="A=2-114"/>
</dbReference>
<dbReference type="PDB" id="7QIJ">
    <property type="method" value="X-ray"/>
    <property type="resolution" value="4.10 A"/>
    <property type="chains" value="AC/BC/CC/DC/EC/FC/GC/HC/IC/JC/KC/LC/MC/NC/OC/PC/QC/RC=2-114"/>
</dbReference>
<dbReference type="PDB" id="8ARA">
    <property type="method" value="X-ray"/>
    <property type="resolution" value="2.30 A"/>
    <property type="chains" value="A/C=2-114"/>
</dbReference>
<dbReference type="PDB" id="8ARB">
    <property type="method" value="X-ray"/>
    <property type="resolution" value="2.63 A"/>
    <property type="chains" value="A/C/E/G=2-114"/>
</dbReference>
<dbReference type="PDBsum" id="7QIH"/>
<dbReference type="PDBsum" id="7QII"/>
<dbReference type="PDBsum" id="7QIJ"/>
<dbReference type="PDBsum" id="8ARA"/>
<dbReference type="PDBsum" id="8ARB"/>
<dbReference type="SMR" id="P0C2N2"/>
<dbReference type="GeneID" id="31412303"/>
<dbReference type="KEGG" id="yet:CH48_4217"/>
<dbReference type="KEGG" id="yew:CH47_4205"/>
<dbReference type="OMA" id="GWLQLQY"/>
<dbReference type="PRO" id="PR:P0C2N2"/>
<dbReference type="GO" id="GO:0005737">
    <property type="term" value="C:cytoplasm"/>
    <property type="evidence" value="ECO:0007669"/>
    <property type="project" value="UniProtKB-SubCell"/>
</dbReference>
<dbReference type="Gene3D" id="1.25.40.10">
    <property type="entry name" value="Tetratricopeptide repeat domain"/>
    <property type="match status" value="1"/>
</dbReference>
<dbReference type="InterPro" id="IPR016684">
    <property type="entry name" value="T3SS_YscY"/>
</dbReference>
<dbReference type="InterPro" id="IPR011990">
    <property type="entry name" value="TPR-like_helical_dom_sf"/>
</dbReference>
<dbReference type="PIRSF" id="PIRSF017117">
    <property type="entry name" value="T3SS_YscY"/>
    <property type="match status" value="1"/>
</dbReference>
<dbReference type="SUPFAM" id="SSF48452">
    <property type="entry name" value="TPR-like"/>
    <property type="match status" value="1"/>
</dbReference>